<sequence length="367" mass="39282">MATKHLFLLPGDGIGPEAMAEVKKLISAMNEKLGSGFATDEGLVGGCAYDAHGAAISDADMAKAMAADAVLFGAVGGPKWDAVPYEVRPEAGLLRLRKDMELFANLRPAICYPALAASSSLKQEVVEGLDILIVRELTGGVYFGEPKQIIDLGNGQKRGIDTQVYDTFEIERISGVAFELARTRKNHVTSMEKRNVMKSGVLWNEVVTQTHKARYADVKLDHMLADAGGMQLVRWPKQFDVIVTDNLFGDMLSDIAAMLTGSIGMLPSASLGAPDVKTKKRKALYEPVHGSAPDIAGKGIANPIAMIASFAMCLRYSFGMVDEADRLEGAIAAVLDQGLRTKDIFSPGMTEVGTVEMGDAIIAKFLG</sequence>
<organism>
    <name type="scientific">Mesorhizobium japonicum (strain LMG 29417 / CECT 9101 / MAFF 303099)</name>
    <name type="common">Mesorhizobium loti (strain MAFF 303099)</name>
    <dbReference type="NCBI Taxonomy" id="266835"/>
    <lineage>
        <taxon>Bacteria</taxon>
        <taxon>Pseudomonadati</taxon>
        <taxon>Pseudomonadota</taxon>
        <taxon>Alphaproteobacteria</taxon>
        <taxon>Hyphomicrobiales</taxon>
        <taxon>Phyllobacteriaceae</taxon>
        <taxon>Mesorhizobium</taxon>
    </lineage>
</organism>
<protein>
    <recommendedName>
        <fullName evidence="1">3-isopropylmalate dehydrogenase</fullName>
        <ecNumber evidence="1">1.1.1.85</ecNumber>
    </recommendedName>
    <alternativeName>
        <fullName evidence="1">3-IPM-DH</fullName>
    </alternativeName>
    <alternativeName>
        <fullName evidence="1">Beta-IPM dehydrogenase</fullName>
        <shortName evidence="1">IMDH</shortName>
    </alternativeName>
</protein>
<reference key="1">
    <citation type="journal article" date="2000" name="DNA Res.">
        <title>Complete genome structure of the nitrogen-fixing symbiotic bacterium Mesorhizobium loti.</title>
        <authorList>
            <person name="Kaneko T."/>
            <person name="Nakamura Y."/>
            <person name="Sato S."/>
            <person name="Asamizu E."/>
            <person name="Kato T."/>
            <person name="Sasamoto S."/>
            <person name="Watanabe A."/>
            <person name="Idesawa K."/>
            <person name="Ishikawa A."/>
            <person name="Kawashima K."/>
            <person name="Kimura T."/>
            <person name="Kishida Y."/>
            <person name="Kiyokawa C."/>
            <person name="Kohara M."/>
            <person name="Matsumoto M."/>
            <person name="Matsuno A."/>
            <person name="Mochizuki Y."/>
            <person name="Nakayama S."/>
            <person name="Nakazaki N."/>
            <person name="Shimpo S."/>
            <person name="Sugimoto M."/>
            <person name="Takeuchi C."/>
            <person name="Yamada M."/>
            <person name="Tabata S."/>
        </authorList>
    </citation>
    <scope>NUCLEOTIDE SEQUENCE [LARGE SCALE GENOMIC DNA]</scope>
    <source>
        <strain>LMG 29417 / CECT 9101 / MAFF 303099</strain>
    </source>
</reference>
<accession>Q98E57</accession>
<gene>
    <name evidence="1" type="primary">leuB</name>
    <name type="ordered locus">mll4399</name>
</gene>
<feature type="chain" id="PRO_0000083736" description="3-isopropylmalate dehydrogenase">
    <location>
        <begin position="1"/>
        <end position="367"/>
    </location>
</feature>
<feature type="binding site" evidence="1">
    <location>
        <begin position="77"/>
        <end position="90"/>
    </location>
    <ligand>
        <name>NAD(+)</name>
        <dbReference type="ChEBI" id="CHEBI:57540"/>
    </ligand>
</feature>
<feature type="binding site" evidence="1">
    <location>
        <position position="97"/>
    </location>
    <ligand>
        <name>substrate</name>
    </ligand>
</feature>
<feature type="binding site" evidence="1">
    <location>
        <position position="107"/>
    </location>
    <ligand>
        <name>substrate</name>
    </ligand>
</feature>
<feature type="binding site" evidence="1">
    <location>
        <position position="135"/>
    </location>
    <ligand>
        <name>substrate</name>
    </ligand>
</feature>
<feature type="binding site" evidence="1">
    <location>
        <position position="226"/>
    </location>
    <ligand>
        <name>Mg(2+)</name>
        <dbReference type="ChEBI" id="CHEBI:18420"/>
    </ligand>
</feature>
<feature type="binding site" evidence="1">
    <location>
        <position position="226"/>
    </location>
    <ligand>
        <name>substrate</name>
    </ligand>
</feature>
<feature type="binding site" evidence="1">
    <location>
        <position position="250"/>
    </location>
    <ligand>
        <name>Mg(2+)</name>
        <dbReference type="ChEBI" id="CHEBI:18420"/>
    </ligand>
</feature>
<feature type="binding site" evidence="1">
    <location>
        <position position="254"/>
    </location>
    <ligand>
        <name>Mg(2+)</name>
        <dbReference type="ChEBI" id="CHEBI:18420"/>
    </ligand>
</feature>
<feature type="binding site" evidence="1">
    <location>
        <begin position="290"/>
        <end position="302"/>
    </location>
    <ligand>
        <name>NAD(+)</name>
        <dbReference type="ChEBI" id="CHEBI:57540"/>
    </ligand>
</feature>
<feature type="site" description="Important for catalysis" evidence="1">
    <location>
        <position position="142"/>
    </location>
</feature>
<feature type="site" description="Important for catalysis" evidence="1">
    <location>
        <position position="193"/>
    </location>
</feature>
<comment type="function">
    <text evidence="1">Catalyzes the oxidation of 3-carboxy-2-hydroxy-4-methylpentanoate (3-isopropylmalate) to 3-carboxy-4-methyl-2-oxopentanoate. The product decarboxylates to 4-methyl-2 oxopentanoate.</text>
</comment>
<comment type="catalytic activity">
    <reaction evidence="1">
        <text>(2R,3S)-3-isopropylmalate + NAD(+) = 4-methyl-2-oxopentanoate + CO2 + NADH</text>
        <dbReference type="Rhea" id="RHEA:32271"/>
        <dbReference type="ChEBI" id="CHEBI:16526"/>
        <dbReference type="ChEBI" id="CHEBI:17865"/>
        <dbReference type="ChEBI" id="CHEBI:35121"/>
        <dbReference type="ChEBI" id="CHEBI:57540"/>
        <dbReference type="ChEBI" id="CHEBI:57945"/>
        <dbReference type="EC" id="1.1.1.85"/>
    </reaction>
</comment>
<comment type="cofactor">
    <cofactor evidence="1">
        <name>Mg(2+)</name>
        <dbReference type="ChEBI" id="CHEBI:18420"/>
    </cofactor>
    <cofactor evidence="1">
        <name>Mn(2+)</name>
        <dbReference type="ChEBI" id="CHEBI:29035"/>
    </cofactor>
    <text evidence="1">Binds 1 Mg(2+) or Mn(2+) ion per subunit.</text>
</comment>
<comment type="pathway">
    <text evidence="1">Amino-acid biosynthesis; L-leucine biosynthesis; L-leucine from 3-methyl-2-oxobutanoate: step 3/4.</text>
</comment>
<comment type="subunit">
    <text evidence="1">Homodimer.</text>
</comment>
<comment type="subcellular location">
    <subcellularLocation>
        <location evidence="1">Cytoplasm</location>
    </subcellularLocation>
</comment>
<comment type="similarity">
    <text evidence="1">Belongs to the isocitrate and isopropylmalate dehydrogenases family. LeuB type 1 subfamily.</text>
</comment>
<proteinExistence type="inferred from homology"/>
<evidence type="ECO:0000255" key="1">
    <source>
        <dbReference type="HAMAP-Rule" id="MF_01033"/>
    </source>
</evidence>
<name>LEU3_RHILO</name>
<keyword id="KW-0028">Amino-acid biosynthesis</keyword>
<keyword id="KW-0100">Branched-chain amino acid biosynthesis</keyword>
<keyword id="KW-0963">Cytoplasm</keyword>
<keyword id="KW-0432">Leucine biosynthesis</keyword>
<keyword id="KW-0460">Magnesium</keyword>
<keyword id="KW-0464">Manganese</keyword>
<keyword id="KW-0479">Metal-binding</keyword>
<keyword id="KW-0520">NAD</keyword>
<keyword id="KW-0560">Oxidoreductase</keyword>
<dbReference type="EC" id="1.1.1.85" evidence="1"/>
<dbReference type="EMBL" id="BA000012">
    <property type="protein sequence ID" value="BAB51063.1"/>
    <property type="molecule type" value="Genomic_DNA"/>
</dbReference>
<dbReference type="RefSeq" id="WP_010912405.1">
    <property type="nucleotide sequence ID" value="NC_002678.2"/>
</dbReference>
<dbReference type="SMR" id="Q98E57"/>
<dbReference type="KEGG" id="mlo:mll4399"/>
<dbReference type="PATRIC" id="fig|266835.9.peg.3472"/>
<dbReference type="eggNOG" id="COG0473">
    <property type="taxonomic scope" value="Bacteria"/>
</dbReference>
<dbReference type="HOGENOM" id="CLU_031953_0_3_5"/>
<dbReference type="UniPathway" id="UPA00048">
    <property type="reaction ID" value="UER00072"/>
</dbReference>
<dbReference type="Proteomes" id="UP000000552">
    <property type="component" value="Chromosome"/>
</dbReference>
<dbReference type="GO" id="GO:0005829">
    <property type="term" value="C:cytosol"/>
    <property type="evidence" value="ECO:0007669"/>
    <property type="project" value="TreeGrafter"/>
</dbReference>
<dbReference type="GO" id="GO:0003862">
    <property type="term" value="F:3-isopropylmalate dehydrogenase activity"/>
    <property type="evidence" value="ECO:0007669"/>
    <property type="project" value="UniProtKB-UniRule"/>
</dbReference>
<dbReference type="GO" id="GO:0000287">
    <property type="term" value="F:magnesium ion binding"/>
    <property type="evidence" value="ECO:0007669"/>
    <property type="project" value="InterPro"/>
</dbReference>
<dbReference type="GO" id="GO:0051287">
    <property type="term" value="F:NAD binding"/>
    <property type="evidence" value="ECO:0007669"/>
    <property type="project" value="InterPro"/>
</dbReference>
<dbReference type="GO" id="GO:0009098">
    <property type="term" value="P:L-leucine biosynthetic process"/>
    <property type="evidence" value="ECO:0007669"/>
    <property type="project" value="UniProtKB-UniRule"/>
</dbReference>
<dbReference type="FunFam" id="3.40.718.10:FF:000006">
    <property type="entry name" value="3-isopropylmalate dehydrogenase"/>
    <property type="match status" value="1"/>
</dbReference>
<dbReference type="Gene3D" id="3.40.718.10">
    <property type="entry name" value="Isopropylmalate Dehydrogenase"/>
    <property type="match status" value="1"/>
</dbReference>
<dbReference type="HAMAP" id="MF_01033">
    <property type="entry name" value="LeuB_type1"/>
    <property type="match status" value="1"/>
</dbReference>
<dbReference type="InterPro" id="IPR019818">
    <property type="entry name" value="IsoCit/isopropylmalate_DH_CS"/>
</dbReference>
<dbReference type="InterPro" id="IPR024084">
    <property type="entry name" value="IsoPropMal-DH-like_dom"/>
</dbReference>
<dbReference type="InterPro" id="IPR004429">
    <property type="entry name" value="Isopropylmalate_DH"/>
</dbReference>
<dbReference type="NCBIfam" id="TIGR00169">
    <property type="entry name" value="leuB"/>
    <property type="match status" value="1"/>
</dbReference>
<dbReference type="PANTHER" id="PTHR42979">
    <property type="entry name" value="3-ISOPROPYLMALATE DEHYDROGENASE"/>
    <property type="match status" value="1"/>
</dbReference>
<dbReference type="PANTHER" id="PTHR42979:SF1">
    <property type="entry name" value="3-ISOPROPYLMALATE DEHYDROGENASE"/>
    <property type="match status" value="1"/>
</dbReference>
<dbReference type="Pfam" id="PF00180">
    <property type="entry name" value="Iso_dh"/>
    <property type="match status" value="1"/>
</dbReference>
<dbReference type="SMART" id="SM01329">
    <property type="entry name" value="Iso_dh"/>
    <property type="match status" value="1"/>
</dbReference>
<dbReference type="SUPFAM" id="SSF53659">
    <property type="entry name" value="Isocitrate/Isopropylmalate dehydrogenase-like"/>
    <property type="match status" value="1"/>
</dbReference>
<dbReference type="PROSITE" id="PS00470">
    <property type="entry name" value="IDH_IMDH"/>
    <property type="match status" value="1"/>
</dbReference>